<dbReference type="EMBL" id="Z28225">
    <property type="protein sequence ID" value="CAA82070.1"/>
    <property type="molecule type" value="Genomic_DNA"/>
</dbReference>
<dbReference type="PIR" id="S38069">
    <property type="entry name" value="S38069"/>
</dbReference>
<dbReference type="STRING" id="4932.YKL225W"/>
<dbReference type="PaxDb" id="4932-YKL225W"/>
<dbReference type="EnsemblFungi" id="YKL225W_mRNA">
    <property type="protein sequence ID" value="YKL225W"/>
    <property type="gene ID" value="YKL225W"/>
</dbReference>
<dbReference type="AGR" id="SGD:S000001708"/>
<dbReference type="SGD" id="S000001708">
    <property type="gene designation" value="YKL225W"/>
</dbReference>
<dbReference type="GeneTree" id="ENSGT00940000177535"/>
<dbReference type="HOGENOM" id="CLU_164954_0_0_1"/>
<dbReference type="InterPro" id="IPR007414">
    <property type="entry name" value="DUF468"/>
</dbReference>
<dbReference type="Pfam" id="PF04318">
    <property type="entry name" value="DUF468"/>
    <property type="match status" value="1"/>
</dbReference>
<comment type="miscellaneous">
    <text evidence="1">Contained within a telomeric X element core sequence.</text>
</comment>
<comment type="similarity">
    <text evidence="1">Belongs to the UPF0320 family.</text>
</comment>
<comment type="caution">
    <text evidence="2">Product of a dubious gene prediction unlikely to encode a functional protein. Because of that it is not part of the S.cerevisiae S288c complete/reference proteome set.</text>
</comment>
<reference key="1">
    <citation type="journal article" date="1994" name="Nature">
        <title>Complete DNA sequence of yeast chromosome XI.</title>
        <authorList>
            <person name="Dujon B."/>
            <person name="Alexandraki D."/>
            <person name="Andre B."/>
            <person name="Ansorge W."/>
            <person name="Baladron V."/>
            <person name="Ballesta J.P.G."/>
            <person name="Banrevi A."/>
            <person name="Bolle P.-A."/>
            <person name="Bolotin-Fukuhara M."/>
            <person name="Bossier P."/>
            <person name="Bou G."/>
            <person name="Boyer J."/>
            <person name="Buitrago M.J."/>
            <person name="Cheret G."/>
            <person name="Colleaux L."/>
            <person name="Daignan-Fornier B."/>
            <person name="del Rey F."/>
            <person name="Dion C."/>
            <person name="Domdey H."/>
            <person name="Duesterhoeft A."/>
            <person name="Duesterhus S."/>
            <person name="Entian K.-D."/>
            <person name="Erfle H."/>
            <person name="Esteban P.F."/>
            <person name="Feldmann H."/>
            <person name="Fernandes L."/>
            <person name="Fobo G.M."/>
            <person name="Fritz C."/>
            <person name="Fukuhara H."/>
            <person name="Gabel C."/>
            <person name="Gaillon L."/>
            <person name="Garcia-Cantalejo J.M."/>
            <person name="Garcia-Ramirez J.J."/>
            <person name="Gent M.E."/>
            <person name="Ghazvini M."/>
            <person name="Goffeau A."/>
            <person name="Gonzalez A."/>
            <person name="Grothues D."/>
            <person name="Guerreiro P."/>
            <person name="Hegemann J.H."/>
            <person name="Hewitt N."/>
            <person name="Hilger F."/>
            <person name="Hollenberg C.P."/>
            <person name="Horaitis O."/>
            <person name="Indge K.J."/>
            <person name="Jacquier A."/>
            <person name="James C.M."/>
            <person name="Jauniaux J.-C."/>
            <person name="Jimenez A."/>
            <person name="Keuchel H."/>
            <person name="Kirchrath L."/>
            <person name="Kleine K."/>
            <person name="Koetter P."/>
            <person name="Legrain P."/>
            <person name="Liebl S."/>
            <person name="Louis E.J."/>
            <person name="Maia e Silva A."/>
            <person name="Marck C."/>
            <person name="Monnier A.-L."/>
            <person name="Moestl D."/>
            <person name="Mueller S."/>
            <person name="Obermaier B."/>
            <person name="Oliver S.G."/>
            <person name="Pallier C."/>
            <person name="Pascolo S."/>
            <person name="Pfeiffer F."/>
            <person name="Philippsen P."/>
            <person name="Planta R.J."/>
            <person name="Pohl F.M."/>
            <person name="Pohl T.M."/>
            <person name="Poehlmann R."/>
            <person name="Portetelle D."/>
            <person name="Purnelle B."/>
            <person name="Puzos V."/>
            <person name="Ramezani Rad M."/>
            <person name="Rasmussen S.W."/>
            <person name="Remacha M.A."/>
            <person name="Revuelta J.L."/>
            <person name="Richard G.-F."/>
            <person name="Rieger M."/>
            <person name="Rodrigues-Pousada C."/>
            <person name="Rose M."/>
            <person name="Rupp T."/>
            <person name="Santos M.A."/>
            <person name="Schwager C."/>
            <person name="Sensen C."/>
            <person name="Skala J."/>
            <person name="Soares H."/>
            <person name="Sor F."/>
            <person name="Stegemann J."/>
            <person name="Tettelin H."/>
            <person name="Thierry A."/>
            <person name="Tzermia M."/>
            <person name="Urrestarazu L.A."/>
            <person name="van Dyck L."/>
            <person name="van Vliet-Reedijk J.C."/>
            <person name="Valens M."/>
            <person name="Vandenbol M."/>
            <person name="Vilela C."/>
            <person name="Vissers S."/>
            <person name="von Wettstein D."/>
            <person name="Voss H."/>
            <person name="Wiemann S."/>
            <person name="Xu G."/>
            <person name="Zimmermann J."/>
            <person name="Haasemann M."/>
            <person name="Becker I."/>
            <person name="Mewes H.-W."/>
        </authorList>
    </citation>
    <scope>NUCLEOTIDE SEQUENCE [LARGE SCALE GENOMIC DNA]</scope>
    <source>
        <strain>ATCC 204508 / S288c</strain>
    </source>
</reference>
<reference key="2">
    <citation type="journal article" date="2014" name="G3 (Bethesda)">
        <title>The reference genome sequence of Saccharomyces cerevisiae: Then and now.</title>
        <authorList>
            <person name="Engel S.R."/>
            <person name="Dietrich F.S."/>
            <person name="Fisk D.G."/>
            <person name="Binkley G."/>
            <person name="Balakrishnan R."/>
            <person name="Costanzo M.C."/>
            <person name="Dwight S.S."/>
            <person name="Hitz B.C."/>
            <person name="Karra K."/>
            <person name="Nash R.S."/>
            <person name="Weng S."/>
            <person name="Wong E.D."/>
            <person name="Lloyd P."/>
            <person name="Skrzypek M.S."/>
            <person name="Miyasato S.R."/>
            <person name="Simison M."/>
            <person name="Cherry J.M."/>
        </authorList>
    </citation>
    <scope>GENOME REANNOTATION</scope>
    <source>
        <strain>ATCC 204508 / S288c</strain>
    </source>
</reference>
<protein>
    <recommendedName>
        <fullName>Putative UPF0320 protein YKL225W</fullName>
    </recommendedName>
</protein>
<accession>P36030</accession>
<organism>
    <name type="scientific">Saccharomyces cerevisiae (strain ATCC 204508 / S288c)</name>
    <name type="common">Baker's yeast</name>
    <dbReference type="NCBI Taxonomy" id="559292"/>
    <lineage>
        <taxon>Eukaryota</taxon>
        <taxon>Fungi</taxon>
        <taxon>Dikarya</taxon>
        <taxon>Ascomycota</taxon>
        <taxon>Saccharomycotina</taxon>
        <taxon>Saccharomycetes</taxon>
        <taxon>Saccharomycetales</taxon>
        <taxon>Saccharomycetaceae</taxon>
        <taxon>Saccharomyces</taxon>
    </lineage>
</organism>
<feature type="chain" id="PRO_0000211374" description="Putative UPF0320 protein YKL225W">
    <location>
        <begin position="1"/>
        <end position="115"/>
    </location>
</feature>
<gene>
    <name type="ordered locus">YKL225W</name>
</gene>
<sequence length="115" mass="13317">MLRIYHSQLTLLSHSTPWPSLTKSVRCTHIIIHGTCLSGLYPVQFTHKTHDYPHFNIYISFSGSKYCITALNAYIIPLLLHILTIQFIHTYFNIPTKSPLKLPKHKNILLFNNNT</sequence>
<proteinExistence type="uncertain"/>
<evidence type="ECO:0000305" key="1"/>
<evidence type="ECO:0000305" key="2">
    <source>
    </source>
</evidence>
<name>YKW5_YEAST</name>